<dbReference type="EMBL" id="CR382128">
    <property type="protein sequence ID" value="CAG82937.1"/>
    <property type="molecule type" value="Genomic_DNA"/>
</dbReference>
<dbReference type="RefSeq" id="XP_500693.1">
    <property type="nucleotide sequence ID" value="XM_500693.1"/>
</dbReference>
<dbReference type="SMR" id="Q6CF69"/>
<dbReference type="FunCoup" id="Q6CF69">
    <property type="interactions" value="1045"/>
</dbReference>
<dbReference type="STRING" id="284591.Q6CF69"/>
<dbReference type="EnsemblFungi" id="CAG82937">
    <property type="protein sequence ID" value="CAG82937"/>
    <property type="gene ID" value="YALI0_B09779g"/>
</dbReference>
<dbReference type="KEGG" id="yli:2907475"/>
<dbReference type="VEuPathDB" id="FungiDB:YALI0_B09779g"/>
<dbReference type="HOGENOM" id="CLU_089419_1_1_1"/>
<dbReference type="InParanoid" id="Q6CF69"/>
<dbReference type="OMA" id="NAGKEMT"/>
<dbReference type="OrthoDB" id="118700at4891"/>
<dbReference type="Proteomes" id="UP000001300">
    <property type="component" value="Chromosome B"/>
</dbReference>
<dbReference type="GO" id="GO:0005737">
    <property type="term" value="C:cytoplasm"/>
    <property type="evidence" value="ECO:0007669"/>
    <property type="project" value="UniProtKB-SubCell"/>
</dbReference>
<dbReference type="GO" id="GO:0005730">
    <property type="term" value="C:nucleolus"/>
    <property type="evidence" value="ECO:0000318"/>
    <property type="project" value="GO_Central"/>
</dbReference>
<dbReference type="GO" id="GO:0030684">
    <property type="term" value="C:preribosome"/>
    <property type="evidence" value="ECO:0007669"/>
    <property type="project" value="EnsemblFungi"/>
</dbReference>
<dbReference type="GO" id="GO:0003735">
    <property type="term" value="F:structural constituent of ribosome"/>
    <property type="evidence" value="ECO:0007669"/>
    <property type="project" value="InterPro"/>
</dbReference>
<dbReference type="GO" id="GO:0042273">
    <property type="term" value="P:ribosomal large subunit biogenesis"/>
    <property type="evidence" value="ECO:0000318"/>
    <property type="project" value="GO_Central"/>
</dbReference>
<dbReference type="CDD" id="cd00472">
    <property type="entry name" value="Ribosomal_L24e_L24"/>
    <property type="match status" value="1"/>
</dbReference>
<dbReference type="FunFam" id="2.30.170.20:FF:000001">
    <property type="entry name" value="probable ribosome biogenesis protein RLP24"/>
    <property type="match status" value="1"/>
</dbReference>
<dbReference type="Gene3D" id="2.30.170.20">
    <property type="entry name" value="Ribosomal protein L24e"/>
    <property type="match status" value="1"/>
</dbReference>
<dbReference type="InterPro" id="IPR038630">
    <property type="entry name" value="L24e/L24_sf"/>
</dbReference>
<dbReference type="InterPro" id="IPR056366">
    <property type="entry name" value="Ribosomal_eL24"/>
</dbReference>
<dbReference type="InterPro" id="IPR000988">
    <property type="entry name" value="Ribosomal_eL24-rel_N"/>
</dbReference>
<dbReference type="InterPro" id="IPR023442">
    <property type="entry name" value="Ribosomal_eL24_CS"/>
</dbReference>
<dbReference type="InterPro" id="IPR011017">
    <property type="entry name" value="TRASH_dom"/>
</dbReference>
<dbReference type="PANTHER" id="PTHR10792">
    <property type="entry name" value="60S RIBOSOMAL PROTEIN L24"/>
    <property type="match status" value="1"/>
</dbReference>
<dbReference type="PANTHER" id="PTHR10792:SF8">
    <property type="entry name" value="RIBOSOME BIOGENESIS PROTEIN RLP24-RELATED"/>
    <property type="match status" value="1"/>
</dbReference>
<dbReference type="Pfam" id="PF01246">
    <property type="entry name" value="Ribosomal_L24e"/>
    <property type="match status" value="1"/>
</dbReference>
<dbReference type="SMART" id="SM00746">
    <property type="entry name" value="TRASH"/>
    <property type="match status" value="1"/>
</dbReference>
<dbReference type="SUPFAM" id="SSF57716">
    <property type="entry name" value="Glucocorticoid receptor-like (DNA-binding domain)"/>
    <property type="match status" value="1"/>
</dbReference>
<dbReference type="PROSITE" id="PS01073">
    <property type="entry name" value="RIBOSOMAL_L24E"/>
    <property type="match status" value="1"/>
</dbReference>
<accession>Q6CF69</accession>
<organism>
    <name type="scientific">Yarrowia lipolytica (strain CLIB 122 / E 150)</name>
    <name type="common">Yeast</name>
    <name type="synonym">Candida lipolytica</name>
    <dbReference type="NCBI Taxonomy" id="284591"/>
    <lineage>
        <taxon>Eukaryota</taxon>
        <taxon>Fungi</taxon>
        <taxon>Dikarya</taxon>
        <taxon>Ascomycota</taxon>
        <taxon>Saccharomycotina</taxon>
        <taxon>Dipodascomycetes</taxon>
        <taxon>Dipodascales</taxon>
        <taxon>Dipodascales incertae sedis</taxon>
        <taxon>Yarrowia</taxon>
    </lineage>
</organism>
<comment type="function">
    <text evidence="1">Involved in the biogenesis of the 60S ribosomal subunit. Ensures the docking of YALI0_B00990g/NOG1 to pre-60S particles. Activates and recruits ATPase AFG2 to cytoplasmic pre-60S ribosomal particles.</text>
</comment>
<comment type="subunit">
    <text evidence="1">Associated with nucleolar and cytoplasmic pre-60S particles. At the end of biogenesis it dissociates from cytoplasmic pre-60S particles and is likely to be exchanged for its ribosomal homolog, RPL24.</text>
</comment>
<comment type="subcellular location">
    <subcellularLocation>
        <location evidence="1">Cytoplasm</location>
    </subcellularLocation>
    <subcellularLocation>
        <location evidence="1">Nucleus</location>
    </subcellularLocation>
    <text evidence="1">Shuttles between the nucleus and the cytoplasm.</text>
</comment>
<comment type="similarity">
    <text evidence="3">Belongs to the eukaryotic ribosomal protein eL24 family.</text>
</comment>
<feature type="chain" id="PRO_0000136909" description="Ribosome biogenesis protein RLP24">
    <location>
        <begin position="1"/>
        <end position="188"/>
    </location>
</feature>
<feature type="region of interest" description="Disordered" evidence="2">
    <location>
        <begin position="140"/>
        <end position="188"/>
    </location>
</feature>
<feature type="compositionally biased region" description="Acidic residues" evidence="2">
    <location>
        <begin position="147"/>
        <end position="169"/>
    </location>
</feature>
<sequence length="188" mass="22546">MRVYNCHFCSSPVYPGKGIMFVRNDSKEFRFCRSKCHKNFKMKRNPRKLRWTKAFRKAAGKEMVVDSTLAFSARRDVPVRYNRDLVEKTLEAMEKVEEIRLKRERAFYKNRMRGNKAAQLEEDRKLVEAHPELLREREVELRRMQEAGEDDDDEDMSEMEVSEEEESEEEREKVEIALKSKSKRKMRA</sequence>
<gene>
    <name type="primary">RLP24</name>
    <name type="ordered locus">YALI0B09779g</name>
</gene>
<proteinExistence type="inferred from homology"/>
<reference key="1">
    <citation type="journal article" date="2004" name="Nature">
        <title>Genome evolution in yeasts.</title>
        <authorList>
            <person name="Dujon B."/>
            <person name="Sherman D."/>
            <person name="Fischer G."/>
            <person name="Durrens P."/>
            <person name="Casaregola S."/>
            <person name="Lafontaine I."/>
            <person name="de Montigny J."/>
            <person name="Marck C."/>
            <person name="Neuveglise C."/>
            <person name="Talla E."/>
            <person name="Goffard N."/>
            <person name="Frangeul L."/>
            <person name="Aigle M."/>
            <person name="Anthouard V."/>
            <person name="Babour A."/>
            <person name="Barbe V."/>
            <person name="Barnay S."/>
            <person name="Blanchin S."/>
            <person name="Beckerich J.-M."/>
            <person name="Beyne E."/>
            <person name="Bleykasten C."/>
            <person name="Boisrame A."/>
            <person name="Boyer J."/>
            <person name="Cattolico L."/>
            <person name="Confanioleri F."/>
            <person name="de Daruvar A."/>
            <person name="Despons L."/>
            <person name="Fabre E."/>
            <person name="Fairhead C."/>
            <person name="Ferry-Dumazet H."/>
            <person name="Groppi A."/>
            <person name="Hantraye F."/>
            <person name="Hennequin C."/>
            <person name="Jauniaux N."/>
            <person name="Joyet P."/>
            <person name="Kachouri R."/>
            <person name="Kerrest A."/>
            <person name="Koszul R."/>
            <person name="Lemaire M."/>
            <person name="Lesur I."/>
            <person name="Ma L."/>
            <person name="Muller H."/>
            <person name="Nicaud J.-M."/>
            <person name="Nikolski M."/>
            <person name="Oztas S."/>
            <person name="Ozier-Kalogeropoulos O."/>
            <person name="Pellenz S."/>
            <person name="Potier S."/>
            <person name="Richard G.-F."/>
            <person name="Straub M.-L."/>
            <person name="Suleau A."/>
            <person name="Swennen D."/>
            <person name="Tekaia F."/>
            <person name="Wesolowski-Louvel M."/>
            <person name="Westhof E."/>
            <person name="Wirth B."/>
            <person name="Zeniou-Meyer M."/>
            <person name="Zivanovic Y."/>
            <person name="Bolotin-Fukuhara M."/>
            <person name="Thierry A."/>
            <person name="Bouchier C."/>
            <person name="Caudron B."/>
            <person name="Scarpelli C."/>
            <person name="Gaillardin C."/>
            <person name="Weissenbach J."/>
            <person name="Wincker P."/>
            <person name="Souciet J.-L."/>
        </authorList>
    </citation>
    <scope>NUCLEOTIDE SEQUENCE [LARGE SCALE GENOMIC DNA]</scope>
    <source>
        <strain>CLIB 122 / E 150</strain>
    </source>
</reference>
<name>RLP24_YARLI</name>
<protein>
    <recommendedName>
        <fullName>Ribosome biogenesis protein RLP24</fullName>
    </recommendedName>
</protein>
<evidence type="ECO:0000250" key="1">
    <source>
        <dbReference type="UniProtKB" id="Q07915"/>
    </source>
</evidence>
<evidence type="ECO:0000256" key="2">
    <source>
        <dbReference type="SAM" id="MobiDB-lite"/>
    </source>
</evidence>
<evidence type="ECO:0000305" key="3"/>
<keyword id="KW-0963">Cytoplasm</keyword>
<keyword id="KW-0539">Nucleus</keyword>
<keyword id="KW-1185">Reference proteome</keyword>
<keyword id="KW-0690">Ribosome biogenesis</keyword>